<sequence>MPRSLKKGPFVDQHLFVKVANENEKGTKNVIKTWSRRSMIIPDMLGHTIAVHDGRKHIPVFVTESMVGHKLGEFALTRTFRGHVKDDRKGKRR</sequence>
<gene>
    <name evidence="1" type="primary">rpsS</name>
    <name type="ordered locus">RSal33209_2161</name>
</gene>
<organism>
    <name type="scientific">Renibacterium salmoninarum (strain ATCC 33209 / DSM 20767 / JCM 11484 / NBRC 15589 / NCIMB 2235)</name>
    <dbReference type="NCBI Taxonomy" id="288705"/>
    <lineage>
        <taxon>Bacteria</taxon>
        <taxon>Bacillati</taxon>
        <taxon>Actinomycetota</taxon>
        <taxon>Actinomycetes</taxon>
        <taxon>Micrococcales</taxon>
        <taxon>Micrococcaceae</taxon>
        <taxon>Renibacterium</taxon>
    </lineage>
</organism>
<evidence type="ECO:0000255" key="1">
    <source>
        <dbReference type="HAMAP-Rule" id="MF_00531"/>
    </source>
</evidence>
<evidence type="ECO:0000305" key="2"/>
<comment type="function">
    <text evidence="1">Protein S19 forms a complex with S13 that binds strongly to the 16S ribosomal RNA.</text>
</comment>
<comment type="similarity">
    <text evidence="1">Belongs to the universal ribosomal protein uS19 family.</text>
</comment>
<reference key="1">
    <citation type="journal article" date="2008" name="J. Bacteriol.">
        <title>Genome sequence of the fish pathogen Renibacterium salmoninarum suggests reductive evolution away from an environmental Arthrobacter ancestor.</title>
        <authorList>
            <person name="Wiens G.D."/>
            <person name="Rockey D.D."/>
            <person name="Wu Z."/>
            <person name="Chang J."/>
            <person name="Levy R."/>
            <person name="Crane S."/>
            <person name="Chen D.S."/>
            <person name="Capri G.R."/>
            <person name="Burnett J.R."/>
            <person name="Sudheesh P.S."/>
            <person name="Schipma M.J."/>
            <person name="Burd H."/>
            <person name="Bhattacharyya A."/>
            <person name="Rhodes L.D."/>
            <person name="Kaul R."/>
            <person name="Strom M.S."/>
        </authorList>
    </citation>
    <scope>NUCLEOTIDE SEQUENCE [LARGE SCALE GENOMIC DNA]</scope>
    <source>
        <strain>ATCC 33209 / DSM 20767 / JCM 11484 / NBRC 15589 / NCIMB 2235</strain>
    </source>
</reference>
<dbReference type="EMBL" id="CP000910">
    <property type="protein sequence ID" value="ABY23893.1"/>
    <property type="molecule type" value="Genomic_DNA"/>
</dbReference>
<dbReference type="RefSeq" id="WP_012245559.1">
    <property type="nucleotide sequence ID" value="NC_010168.1"/>
</dbReference>
<dbReference type="SMR" id="A9WSV5"/>
<dbReference type="STRING" id="288705.RSal33209_2161"/>
<dbReference type="KEGG" id="rsa:RSal33209_2161"/>
<dbReference type="eggNOG" id="COG0185">
    <property type="taxonomic scope" value="Bacteria"/>
</dbReference>
<dbReference type="HOGENOM" id="CLU_144911_0_1_11"/>
<dbReference type="Proteomes" id="UP000002007">
    <property type="component" value="Chromosome"/>
</dbReference>
<dbReference type="GO" id="GO:0005737">
    <property type="term" value="C:cytoplasm"/>
    <property type="evidence" value="ECO:0007669"/>
    <property type="project" value="UniProtKB-ARBA"/>
</dbReference>
<dbReference type="GO" id="GO:0015935">
    <property type="term" value="C:small ribosomal subunit"/>
    <property type="evidence" value="ECO:0007669"/>
    <property type="project" value="InterPro"/>
</dbReference>
<dbReference type="GO" id="GO:0019843">
    <property type="term" value="F:rRNA binding"/>
    <property type="evidence" value="ECO:0007669"/>
    <property type="project" value="UniProtKB-UniRule"/>
</dbReference>
<dbReference type="GO" id="GO:0003735">
    <property type="term" value="F:structural constituent of ribosome"/>
    <property type="evidence" value="ECO:0007669"/>
    <property type="project" value="InterPro"/>
</dbReference>
<dbReference type="GO" id="GO:0000028">
    <property type="term" value="P:ribosomal small subunit assembly"/>
    <property type="evidence" value="ECO:0007669"/>
    <property type="project" value="TreeGrafter"/>
</dbReference>
<dbReference type="GO" id="GO:0006412">
    <property type="term" value="P:translation"/>
    <property type="evidence" value="ECO:0007669"/>
    <property type="project" value="UniProtKB-UniRule"/>
</dbReference>
<dbReference type="FunFam" id="3.30.860.10:FF:000001">
    <property type="entry name" value="30S ribosomal protein S19"/>
    <property type="match status" value="1"/>
</dbReference>
<dbReference type="Gene3D" id="3.30.860.10">
    <property type="entry name" value="30s Ribosomal Protein S19, Chain A"/>
    <property type="match status" value="1"/>
</dbReference>
<dbReference type="HAMAP" id="MF_00531">
    <property type="entry name" value="Ribosomal_uS19"/>
    <property type="match status" value="1"/>
</dbReference>
<dbReference type="InterPro" id="IPR002222">
    <property type="entry name" value="Ribosomal_uS19"/>
</dbReference>
<dbReference type="InterPro" id="IPR005732">
    <property type="entry name" value="Ribosomal_uS19_bac-type"/>
</dbReference>
<dbReference type="InterPro" id="IPR020934">
    <property type="entry name" value="Ribosomal_uS19_CS"/>
</dbReference>
<dbReference type="InterPro" id="IPR023575">
    <property type="entry name" value="Ribosomal_uS19_SF"/>
</dbReference>
<dbReference type="NCBIfam" id="TIGR01050">
    <property type="entry name" value="rpsS_bact"/>
    <property type="match status" value="1"/>
</dbReference>
<dbReference type="PANTHER" id="PTHR11880">
    <property type="entry name" value="RIBOSOMAL PROTEIN S19P FAMILY MEMBER"/>
    <property type="match status" value="1"/>
</dbReference>
<dbReference type="PANTHER" id="PTHR11880:SF8">
    <property type="entry name" value="SMALL RIBOSOMAL SUBUNIT PROTEIN US19M"/>
    <property type="match status" value="1"/>
</dbReference>
<dbReference type="Pfam" id="PF00203">
    <property type="entry name" value="Ribosomal_S19"/>
    <property type="match status" value="1"/>
</dbReference>
<dbReference type="PIRSF" id="PIRSF002144">
    <property type="entry name" value="Ribosomal_S19"/>
    <property type="match status" value="1"/>
</dbReference>
<dbReference type="PRINTS" id="PR00975">
    <property type="entry name" value="RIBOSOMALS19"/>
</dbReference>
<dbReference type="SUPFAM" id="SSF54570">
    <property type="entry name" value="Ribosomal protein S19"/>
    <property type="match status" value="1"/>
</dbReference>
<dbReference type="PROSITE" id="PS00323">
    <property type="entry name" value="RIBOSOMAL_S19"/>
    <property type="match status" value="1"/>
</dbReference>
<protein>
    <recommendedName>
        <fullName evidence="1">Small ribosomal subunit protein uS19</fullName>
    </recommendedName>
    <alternativeName>
        <fullName evidence="2">30S ribosomal protein S19</fullName>
    </alternativeName>
</protein>
<keyword id="KW-1185">Reference proteome</keyword>
<keyword id="KW-0687">Ribonucleoprotein</keyword>
<keyword id="KW-0689">Ribosomal protein</keyword>
<keyword id="KW-0694">RNA-binding</keyword>
<keyword id="KW-0699">rRNA-binding</keyword>
<accession>A9WSV5</accession>
<name>RS19_RENSM</name>
<feature type="chain" id="PRO_1000081786" description="Small ribosomal subunit protein uS19">
    <location>
        <begin position="1"/>
        <end position="93"/>
    </location>
</feature>
<proteinExistence type="inferred from homology"/>